<feature type="chain" id="PRO_0000023133" description="Aspartate 1-decarboxylase beta chain" evidence="1">
    <location>
        <begin position="1"/>
        <end position="24"/>
    </location>
</feature>
<feature type="chain" id="PRO_0000023134" description="Aspartate 1-decarboxylase alpha chain" evidence="1">
    <location>
        <begin position="25"/>
        <end position="126"/>
    </location>
</feature>
<feature type="active site" description="Schiff-base intermediate with substrate; via pyruvic acid" evidence="1">
    <location>
        <position position="25"/>
    </location>
</feature>
<feature type="active site" description="Proton donor" evidence="1">
    <location>
        <position position="58"/>
    </location>
</feature>
<feature type="binding site" evidence="1">
    <location>
        <position position="57"/>
    </location>
    <ligand>
        <name>substrate</name>
    </ligand>
</feature>
<feature type="binding site" evidence="1">
    <location>
        <begin position="73"/>
        <end position="75"/>
    </location>
    <ligand>
        <name>substrate</name>
    </ligand>
</feature>
<feature type="modified residue" description="Pyruvic acid (Ser)" evidence="1">
    <location>
        <position position="25"/>
    </location>
</feature>
<accession>Q7N871</accession>
<organism>
    <name type="scientific">Photorhabdus laumondii subsp. laumondii (strain DSM 15139 / CIP 105565 / TT01)</name>
    <name type="common">Photorhabdus luminescens subsp. laumondii</name>
    <dbReference type="NCBI Taxonomy" id="243265"/>
    <lineage>
        <taxon>Bacteria</taxon>
        <taxon>Pseudomonadati</taxon>
        <taxon>Pseudomonadota</taxon>
        <taxon>Gammaproteobacteria</taxon>
        <taxon>Enterobacterales</taxon>
        <taxon>Morganellaceae</taxon>
        <taxon>Photorhabdus</taxon>
    </lineage>
</organism>
<reference key="1">
    <citation type="journal article" date="2003" name="Nat. Biotechnol.">
        <title>The genome sequence of the entomopathogenic bacterium Photorhabdus luminescens.</title>
        <authorList>
            <person name="Duchaud E."/>
            <person name="Rusniok C."/>
            <person name="Frangeul L."/>
            <person name="Buchrieser C."/>
            <person name="Givaudan A."/>
            <person name="Taourit S."/>
            <person name="Bocs S."/>
            <person name="Boursaux-Eude C."/>
            <person name="Chandler M."/>
            <person name="Charles J.-F."/>
            <person name="Dassa E."/>
            <person name="Derose R."/>
            <person name="Derzelle S."/>
            <person name="Freyssinet G."/>
            <person name="Gaudriault S."/>
            <person name="Medigue C."/>
            <person name="Lanois A."/>
            <person name="Powell K."/>
            <person name="Siguier P."/>
            <person name="Vincent R."/>
            <person name="Wingate V."/>
            <person name="Zouine M."/>
            <person name="Glaser P."/>
            <person name="Boemare N."/>
            <person name="Danchin A."/>
            <person name="Kunst F."/>
        </authorList>
    </citation>
    <scope>NUCLEOTIDE SEQUENCE [LARGE SCALE GENOMIC DNA]</scope>
    <source>
        <strain>DSM 15139 / CIP 105565 / TT01</strain>
    </source>
</reference>
<evidence type="ECO:0000255" key="1">
    <source>
        <dbReference type="HAMAP-Rule" id="MF_00446"/>
    </source>
</evidence>
<comment type="function">
    <text evidence="1">Catalyzes the pyruvoyl-dependent decarboxylation of aspartate to produce beta-alanine.</text>
</comment>
<comment type="catalytic activity">
    <reaction evidence="1">
        <text>L-aspartate + H(+) = beta-alanine + CO2</text>
        <dbReference type="Rhea" id="RHEA:19497"/>
        <dbReference type="ChEBI" id="CHEBI:15378"/>
        <dbReference type="ChEBI" id="CHEBI:16526"/>
        <dbReference type="ChEBI" id="CHEBI:29991"/>
        <dbReference type="ChEBI" id="CHEBI:57966"/>
        <dbReference type="EC" id="4.1.1.11"/>
    </reaction>
</comment>
<comment type="cofactor">
    <cofactor evidence="1">
        <name>pyruvate</name>
        <dbReference type="ChEBI" id="CHEBI:15361"/>
    </cofactor>
    <text evidence="1">Binds 1 pyruvoyl group covalently per subunit.</text>
</comment>
<comment type="pathway">
    <text evidence="1">Cofactor biosynthesis; (R)-pantothenate biosynthesis; beta-alanine from L-aspartate: step 1/1.</text>
</comment>
<comment type="subunit">
    <text evidence="1">Heterooctamer of four alpha and four beta subunits.</text>
</comment>
<comment type="subcellular location">
    <subcellularLocation>
        <location evidence="1">Cytoplasm</location>
    </subcellularLocation>
</comment>
<comment type="PTM">
    <text evidence="1">Is synthesized initially as an inactive proenzyme, which is activated by self-cleavage at a specific serine bond to produce a beta-subunit with a hydroxyl group at its C-terminus and an alpha-subunit with a pyruvoyl group at its N-terminus.</text>
</comment>
<comment type="similarity">
    <text evidence="1">Belongs to the PanD family.</text>
</comment>
<dbReference type="EC" id="4.1.1.11" evidence="1"/>
<dbReference type="EMBL" id="BX571861">
    <property type="protein sequence ID" value="CAE13165.1"/>
    <property type="molecule type" value="Genomic_DNA"/>
</dbReference>
<dbReference type="RefSeq" id="WP_011145238.1">
    <property type="nucleotide sequence ID" value="NC_005126.1"/>
</dbReference>
<dbReference type="SMR" id="Q7N871"/>
<dbReference type="STRING" id="243265.plu0870"/>
<dbReference type="GeneID" id="48847159"/>
<dbReference type="KEGG" id="plu:plu0870"/>
<dbReference type="eggNOG" id="COG0853">
    <property type="taxonomic scope" value="Bacteria"/>
</dbReference>
<dbReference type="HOGENOM" id="CLU_115305_2_1_6"/>
<dbReference type="OrthoDB" id="9803983at2"/>
<dbReference type="UniPathway" id="UPA00028">
    <property type="reaction ID" value="UER00002"/>
</dbReference>
<dbReference type="Proteomes" id="UP000002514">
    <property type="component" value="Chromosome"/>
</dbReference>
<dbReference type="GO" id="GO:0005829">
    <property type="term" value="C:cytosol"/>
    <property type="evidence" value="ECO:0007669"/>
    <property type="project" value="TreeGrafter"/>
</dbReference>
<dbReference type="GO" id="GO:0004068">
    <property type="term" value="F:aspartate 1-decarboxylase activity"/>
    <property type="evidence" value="ECO:0007669"/>
    <property type="project" value="UniProtKB-UniRule"/>
</dbReference>
<dbReference type="GO" id="GO:0006523">
    <property type="term" value="P:alanine biosynthetic process"/>
    <property type="evidence" value="ECO:0007669"/>
    <property type="project" value="InterPro"/>
</dbReference>
<dbReference type="GO" id="GO:0015940">
    <property type="term" value="P:pantothenate biosynthetic process"/>
    <property type="evidence" value="ECO:0007669"/>
    <property type="project" value="UniProtKB-UniRule"/>
</dbReference>
<dbReference type="CDD" id="cd06919">
    <property type="entry name" value="Asp_decarbox"/>
    <property type="match status" value="1"/>
</dbReference>
<dbReference type="FunFam" id="2.40.40.20:FF:000004">
    <property type="entry name" value="Aspartate 1-decarboxylase"/>
    <property type="match status" value="1"/>
</dbReference>
<dbReference type="Gene3D" id="2.40.40.20">
    <property type="match status" value="1"/>
</dbReference>
<dbReference type="HAMAP" id="MF_00446">
    <property type="entry name" value="PanD"/>
    <property type="match status" value="1"/>
</dbReference>
<dbReference type="InterPro" id="IPR009010">
    <property type="entry name" value="Asp_de-COase-like_dom_sf"/>
</dbReference>
<dbReference type="InterPro" id="IPR003190">
    <property type="entry name" value="Asp_decarbox"/>
</dbReference>
<dbReference type="NCBIfam" id="TIGR00223">
    <property type="entry name" value="panD"/>
    <property type="match status" value="1"/>
</dbReference>
<dbReference type="PANTHER" id="PTHR21012">
    <property type="entry name" value="ASPARTATE 1-DECARBOXYLASE"/>
    <property type="match status" value="1"/>
</dbReference>
<dbReference type="PANTHER" id="PTHR21012:SF0">
    <property type="entry name" value="ASPARTATE 1-DECARBOXYLASE"/>
    <property type="match status" value="1"/>
</dbReference>
<dbReference type="Pfam" id="PF02261">
    <property type="entry name" value="Asp_decarbox"/>
    <property type="match status" value="1"/>
</dbReference>
<dbReference type="PIRSF" id="PIRSF006246">
    <property type="entry name" value="Asp_decarbox"/>
    <property type="match status" value="1"/>
</dbReference>
<dbReference type="SUPFAM" id="SSF50692">
    <property type="entry name" value="ADC-like"/>
    <property type="match status" value="1"/>
</dbReference>
<protein>
    <recommendedName>
        <fullName evidence="1">Aspartate 1-decarboxylase</fullName>
        <ecNumber evidence="1">4.1.1.11</ecNumber>
    </recommendedName>
    <alternativeName>
        <fullName evidence="1">Aspartate alpha-decarboxylase</fullName>
    </alternativeName>
    <component>
        <recommendedName>
            <fullName evidence="1">Aspartate 1-decarboxylase beta chain</fullName>
        </recommendedName>
    </component>
    <component>
        <recommendedName>
            <fullName evidence="1">Aspartate 1-decarboxylase alpha chain</fullName>
        </recommendedName>
    </component>
</protein>
<keyword id="KW-0068">Autocatalytic cleavage</keyword>
<keyword id="KW-0963">Cytoplasm</keyword>
<keyword id="KW-0210">Decarboxylase</keyword>
<keyword id="KW-0456">Lyase</keyword>
<keyword id="KW-0566">Pantothenate biosynthesis</keyword>
<keyword id="KW-0670">Pyruvate</keyword>
<keyword id="KW-1185">Reference proteome</keyword>
<keyword id="KW-0704">Schiff base</keyword>
<keyword id="KW-0865">Zymogen</keyword>
<gene>
    <name evidence="1" type="primary">panD</name>
    <name type="ordered locus">plu0870</name>
</gene>
<name>PAND_PHOLL</name>
<sequence>MLRTMLQGKLHRVKVTQADLHYEGSCAMDQNFMDAAGILEYEAIDIYNVDNGERFSTYAIAAERGSRIISVNGAAARRAAVGDKLIICSYVQIPNEDARHHKPNIAYFDGDNIMRRIAKAVPVQVA</sequence>
<proteinExistence type="inferred from homology"/>